<accession>B0TUV6</accession>
<dbReference type="EMBL" id="CP000931">
    <property type="protein sequence ID" value="ABZ78223.1"/>
    <property type="molecule type" value="Genomic_DNA"/>
</dbReference>
<dbReference type="RefSeq" id="WP_012278741.1">
    <property type="nucleotide sequence ID" value="NC_010334.1"/>
</dbReference>
<dbReference type="SMR" id="B0TUV6"/>
<dbReference type="STRING" id="458817.Shal_3682"/>
<dbReference type="KEGG" id="shl:Shal_3682"/>
<dbReference type="eggNOG" id="COG0103">
    <property type="taxonomic scope" value="Bacteria"/>
</dbReference>
<dbReference type="HOGENOM" id="CLU_046483_2_1_6"/>
<dbReference type="OrthoDB" id="9803965at2"/>
<dbReference type="Proteomes" id="UP000001317">
    <property type="component" value="Chromosome"/>
</dbReference>
<dbReference type="GO" id="GO:0022627">
    <property type="term" value="C:cytosolic small ribosomal subunit"/>
    <property type="evidence" value="ECO:0007669"/>
    <property type="project" value="TreeGrafter"/>
</dbReference>
<dbReference type="GO" id="GO:0003723">
    <property type="term" value="F:RNA binding"/>
    <property type="evidence" value="ECO:0007669"/>
    <property type="project" value="TreeGrafter"/>
</dbReference>
<dbReference type="GO" id="GO:0003735">
    <property type="term" value="F:structural constituent of ribosome"/>
    <property type="evidence" value="ECO:0007669"/>
    <property type="project" value="InterPro"/>
</dbReference>
<dbReference type="GO" id="GO:0006412">
    <property type="term" value="P:translation"/>
    <property type="evidence" value="ECO:0007669"/>
    <property type="project" value="UniProtKB-UniRule"/>
</dbReference>
<dbReference type="FunFam" id="3.30.230.10:FF:000001">
    <property type="entry name" value="30S ribosomal protein S9"/>
    <property type="match status" value="1"/>
</dbReference>
<dbReference type="Gene3D" id="3.30.230.10">
    <property type="match status" value="1"/>
</dbReference>
<dbReference type="HAMAP" id="MF_00532_B">
    <property type="entry name" value="Ribosomal_uS9_B"/>
    <property type="match status" value="1"/>
</dbReference>
<dbReference type="InterPro" id="IPR020568">
    <property type="entry name" value="Ribosomal_Su5_D2-typ_SF"/>
</dbReference>
<dbReference type="InterPro" id="IPR000754">
    <property type="entry name" value="Ribosomal_uS9"/>
</dbReference>
<dbReference type="InterPro" id="IPR023035">
    <property type="entry name" value="Ribosomal_uS9_bac/plastid"/>
</dbReference>
<dbReference type="InterPro" id="IPR020574">
    <property type="entry name" value="Ribosomal_uS9_CS"/>
</dbReference>
<dbReference type="InterPro" id="IPR014721">
    <property type="entry name" value="Ribsml_uS5_D2-typ_fold_subgr"/>
</dbReference>
<dbReference type="NCBIfam" id="NF001099">
    <property type="entry name" value="PRK00132.1"/>
    <property type="match status" value="1"/>
</dbReference>
<dbReference type="PANTHER" id="PTHR21569">
    <property type="entry name" value="RIBOSOMAL PROTEIN S9"/>
    <property type="match status" value="1"/>
</dbReference>
<dbReference type="PANTHER" id="PTHR21569:SF1">
    <property type="entry name" value="SMALL RIBOSOMAL SUBUNIT PROTEIN US9M"/>
    <property type="match status" value="1"/>
</dbReference>
<dbReference type="Pfam" id="PF00380">
    <property type="entry name" value="Ribosomal_S9"/>
    <property type="match status" value="1"/>
</dbReference>
<dbReference type="SUPFAM" id="SSF54211">
    <property type="entry name" value="Ribosomal protein S5 domain 2-like"/>
    <property type="match status" value="1"/>
</dbReference>
<dbReference type="PROSITE" id="PS00360">
    <property type="entry name" value="RIBOSOMAL_S9"/>
    <property type="match status" value="1"/>
</dbReference>
<reference key="1">
    <citation type="submission" date="2008-01" db="EMBL/GenBank/DDBJ databases">
        <title>Complete sequence of Shewanella halifaxensis HAW-EB4.</title>
        <authorList>
            <consortium name="US DOE Joint Genome Institute"/>
            <person name="Copeland A."/>
            <person name="Lucas S."/>
            <person name="Lapidus A."/>
            <person name="Glavina del Rio T."/>
            <person name="Dalin E."/>
            <person name="Tice H."/>
            <person name="Bruce D."/>
            <person name="Goodwin L."/>
            <person name="Pitluck S."/>
            <person name="Sims D."/>
            <person name="Brettin T."/>
            <person name="Detter J.C."/>
            <person name="Han C."/>
            <person name="Kuske C.R."/>
            <person name="Schmutz J."/>
            <person name="Larimer F."/>
            <person name="Land M."/>
            <person name="Hauser L."/>
            <person name="Kyrpides N."/>
            <person name="Kim E."/>
            <person name="Zhao J.-S."/>
            <person name="Richardson P."/>
        </authorList>
    </citation>
    <scope>NUCLEOTIDE SEQUENCE [LARGE SCALE GENOMIC DNA]</scope>
    <source>
        <strain>HAW-EB4</strain>
    </source>
</reference>
<sequence length="130" mass="14536">MAATQYYGTGRRKTSTARVFAKVGTGNIIVNKLPLDEYFGRETSRMVVRQPLELVEMTDKLDIMVTVKGGGNTGQAGAIRHGITRALMELDESLRPSLRAAGFVTRDARKVERKKVGLRKARRKPQFSKR</sequence>
<proteinExistence type="inferred from homology"/>
<name>RS9_SHEHH</name>
<evidence type="ECO:0000255" key="1">
    <source>
        <dbReference type="HAMAP-Rule" id="MF_00532"/>
    </source>
</evidence>
<evidence type="ECO:0000305" key="2"/>
<keyword id="KW-0687">Ribonucleoprotein</keyword>
<keyword id="KW-0689">Ribosomal protein</keyword>
<organism>
    <name type="scientific">Shewanella halifaxensis (strain HAW-EB4)</name>
    <dbReference type="NCBI Taxonomy" id="458817"/>
    <lineage>
        <taxon>Bacteria</taxon>
        <taxon>Pseudomonadati</taxon>
        <taxon>Pseudomonadota</taxon>
        <taxon>Gammaproteobacteria</taxon>
        <taxon>Alteromonadales</taxon>
        <taxon>Shewanellaceae</taxon>
        <taxon>Shewanella</taxon>
    </lineage>
</organism>
<comment type="similarity">
    <text evidence="1">Belongs to the universal ribosomal protein uS9 family.</text>
</comment>
<protein>
    <recommendedName>
        <fullName evidence="1">Small ribosomal subunit protein uS9</fullName>
    </recommendedName>
    <alternativeName>
        <fullName evidence="2">30S ribosomal protein S9</fullName>
    </alternativeName>
</protein>
<feature type="chain" id="PRO_1000081834" description="Small ribosomal subunit protein uS9">
    <location>
        <begin position="1"/>
        <end position="130"/>
    </location>
</feature>
<gene>
    <name evidence="1" type="primary">rpsI</name>
    <name type="ordered locus">Shal_3682</name>
</gene>